<proteinExistence type="evidence at protein level"/>
<dbReference type="EMBL" id="M16250">
    <property type="protein sequence ID" value="AAA28683.1"/>
    <property type="molecule type" value="mRNA"/>
</dbReference>
<dbReference type="EMBL" id="X52098">
    <property type="protein sequence ID" value="CAA36318.1"/>
    <property type="molecule type" value="Genomic_DNA"/>
</dbReference>
<dbReference type="EMBL" id="AE014297">
    <property type="protein sequence ID" value="AAF55768.1"/>
    <property type="molecule type" value="Genomic_DNA"/>
</dbReference>
<dbReference type="EMBL" id="BT025813">
    <property type="protein sequence ID" value="ABF85713.1"/>
    <property type="molecule type" value="mRNA"/>
</dbReference>
<dbReference type="PIR" id="S14706">
    <property type="entry name" value="SMFF2"/>
</dbReference>
<dbReference type="RefSeq" id="NP_001287425.1">
    <property type="nucleotide sequence ID" value="NM_001300496.1"/>
</dbReference>
<dbReference type="RefSeq" id="NP_001287426.1">
    <property type="nucleotide sequence ID" value="NM_001300497.1"/>
</dbReference>
<dbReference type="RefSeq" id="NP_524413.1">
    <property type="nucleotide sequence ID" value="NM_079689.3"/>
</dbReference>
<dbReference type="BioGRID" id="67404">
    <property type="interactions" value="8"/>
</dbReference>
<dbReference type="DIP" id="DIP-20926N"/>
<dbReference type="IntAct" id="P11956">
    <property type="interactions" value="3"/>
</dbReference>
<dbReference type="STRING" id="7227.FBpp0311981"/>
<dbReference type="PaxDb" id="7227-FBpp0083298"/>
<dbReference type="DNASU" id="42424"/>
<dbReference type="EnsemblMetazoa" id="FBtr0083890">
    <property type="protein sequence ID" value="FBpp0083298"/>
    <property type="gene ID" value="FBgn0002869"/>
</dbReference>
<dbReference type="EnsemblMetazoa" id="FBtr0346152">
    <property type="protein sequence ID" value="FBpp0311980"/>
    <property type="gene ID" value="FBgn0002869"/>
</dbReference>
<dbReference type="EnsemblMetazoa" id="FBtr0346153">
    <property type="protein sequence ID" value="FBpp0311981"/>
    <property type="gene ID" value="FBgn0002869"/>
</dbReference>
<dbReference type="GeneID" id="42424"/>
<dbReference type="KEGG" id="dme:Dmel_CG4312"/>
<dbReference type="AGR" id="FB:FBgn0002869"/>
<dbReference type="CTD" id="42424"/>
<dbReference type="FlyBase" id="FBgn0002869">
    <property type="gene designation" value="MtnB"/>
</dbReference>
<dbReference type="VEuPathDB" id="VectorBase:FBgn0002869"/>
<dbReference type="eggNOG" id="KOG4738">
    <property type="taxonomic scope" value="Eukaryota"/>
</dbReference>
<dbReference type="HOGENOM" id="CLU_217426_0_0_1"/>
<dbReference type="InParanoid" id="P11956"/>
<dbReference type="OrthoDB" id="7802073at2759"/>
<dbReference type="PhylomeDB" id="P11956"/>
<dbReference type="BioGRID-ORCS" id="42424">
    <property type="hits" value="0 hits in 1 CRISPR screen"/>
</dbReference>
<dbReference type="GenomeRNAi" id="42424"/>
<dbReference type="PRO" id="PR:P11956"/>
<dbReference type="Proteomes" id="UP000000803">
    <property type="component" value="Chromosome 3R"/>
</dbReference>
<dbReference type="Bgee" id="FBgn0002869">
    <property type="expression patterns" value="Expressed in adult class III enteroendocrine cell in adult midgut (Drosophila) and 39 other cell types or tissues"/>
</dbReference>
<dbReference type="ExpressionAtlas" id="P11956">
    <property type="expression patterns" value="baseline and differential"/>
</dbReference>
<dbReference type="GO" id="GO:0005507">
    <property type="term" value="F:copper ion binding"/>
    <property type="evidence" value="ECO:0000314"/>
    <property type="project" value="FlyBase"/>
</dbReference>
<dbReference type="GO" id="GO:0046872">
    <property type="term" value="F:metal ion binding"/>
    <property type="evidence" value="ECO:0000314"/>
    <property type="project" value="FlyBase"/>
</dbReference>
<dbReference type="GO" id="GO:0140961">
    <property type="term" value="P:cellular detoxification of metal ion"/>
    <property type="evidence" value="ECO:0000315"/>
    <property type="project" value="FlyBase"/>
</dbReference>
<dbReference type="GO" id="GO:0010038">
    <property type="term" value="P:response to metal ion"/>
    <property type="evidence" value="ECO:0000314"/>
    <property type="project" value="FlyBase"/>
</dbReference>
<dbReference type="InterPro" id="IPR000966">
    <property type="entry name" value="Metalthion_5"/>
</dbReference>
<dbReference type="Pfam" id="PF02067">
    <property type="entry name" value="Metallothio_5"/>
    <property type="match status" value="1"/>
</dbReference>
<dbReference type="PRINTS" id="PR00872">
    <property type="entry name" value="MTDIPTERA"/>
</dbReference>
<comment type="function">
    <text>This protein binds cations of several transition elements. Thought to be involved in metal ion homeostasis.</text>
</comment>
<comment type="interaction">
    <interactant intactId="EBI-88468">
        <id>P11956</id>
    </interactant>
    <interactant intactId="EBI-130849">
        <id>Q1WWB7</id>
        <label>betaG</label>
    </interactant>
    <organismsDiffer>false</organismsDiffer>
    <experiments>2</experiments>
</comment>
<comment type="interaction">
    <interactant intactId="EBI-88468">
        <id>P11956</id>
    </interactant>
    <interactant intactId="EBI-82319">
        <id>Q9V3P0</id>
        <label>Prx2</label>
    </interactant>
    <organismsDiffer>false</organismsDiffer>
    <experiments>2</experiments>
</comment>
<comment type="developmental stage">
    <text>Expressed predominantly in embryonic and larval stages.</text>
</comment>
<comment type="induction">
    <text>Strongly induced by cadmium, copper and mercury.</text>
</comment>
<comment type="domain">
    <text>All cysteine residues are arranged in C-X-C groups. These are thought to be the metal-binding sites in other metallothioneins.</text>
</comment>
<comment type="similarity">
    <text evidence="1">Belongs to the metallothionein superfamily. Type 5 family.</text>
</comment>
<sequence length="43" mass="4525">MVCKGCGTNCQCSAQKCGDNCACNKDCQCVCKNGPKDQCCSNK</sequence>
<protein>
    <recommendedName>
        <fullName>Metallothionein-2</fullName>
        <shortName>MT-2</shortName>
    </recommendedName>
    <alternativeName>
        <fullName>Metallothionein B</fullName>
    </alternativeName>
</protein>
<gene>
    <name type="primary">MtnB</name>
    <name type="synonym">Mto</name>
    <name type="ORF">CG4312</name>
</gene>
<feature type="chain" id="PRO_0000197355" description="Metallothionein-2">
    <location>
        <begin position="1"/>
        <end position="43"/>
    </location>
</feature>
<feature type="modified residue" description="Blocked amino end (Met)">
    <location>
        <position position="1"/>
    </location>
</feature>
<organism>
    <name type="scientific">Drosophila melanogaster</name>
    <name type="common">Fruit fly</name>
    <dbReference type="NCBI Taxonomy" id="7227"/>
    <lineage>
        <taxon>Eukaryota</taxon>
        <taxon>Metazoa</taxon>
        <taxon>Ecdysozoa</taxon>
        <taxon>Arthropoda</taxon>
        <taxon>Hexapoda</taxon>
        <taxon>Insecta</taxon>
        <taxon>Pterygota</taxon>
        <taxon>Neoptera</taxon>
        <taxon>Endopterygota</taxon>
        <taxon>Diptera</taxon>
        <taxon>Brachycera</taxon>
        <taxon>Muscomorpha</taxon>
        <taxon>Ephydroidea</taxon>
        <taxon>Drosophilidae</taxon>
        <taxon>Drosophila</taxon>
        <taxon>Sophophora</taxon>
    </lineage>
</organism>
<keyword id="KW-0104">Cadmium</keyword>
<keyword id="KW-0186">Copper</keyword>
<keyword id="KW-0903">Direct protein sequencing</keyword>
<keyword id="KW-0479">Metal-binding</keyword>
<keyword id="KW-1185">Reference proteome</keyword>
<keyword id="KW-0862">Zinc</keyword>
<accession>P11956</accession>
<accession>Q1ECC1</accession>
<accession>Q9VDM2</accession>
<evidence type="ECO:0000305" key="1"/>
<name>MT2_DROME</name>
<reference key="1">
    <citation type="journal article" date="1987" name="Proc. Natl. Acad. Sci. U.S.A.">
        <title>Metallothionein genes in Drosophila melanogaster constitute a dual system.</title>
        <authorList>
            <person name="Mokdad R."/>
            <person name="Debec A."/>
            <person name="Wegnez M."/>
        </authorList>
    </citation>
    <scope>NUCLEOTIDE SEQUENCE [MRNA]</scope>
    <source>
        <strain>Oregon-R</strain>
    </source>
</reference>
<reference key="2">
    <citation type="journal article" date="1990" name="J. Mol. Biol.">
        <title>Metallothionein Mto gene of Drosophila melanogaster: structure and regulation.</title>
        <authorList>
            <person name="Silar P."/>
            <person name="Theodore L."/>
            <person name="Mokdad R."/>
            <person name="Erraiss N.-E."/>
            <person name="Cadic A."/>
            <person name="Wegnez M."/>
        </authorList>
    </citation>
    <scope>NUCLEOTIDE SEQUENCE [GENOMIC DNA]</scope>
    <scope>BLOCKAGE OF N-TERMINUS</scope>
    <scope>PROTEIN SEQUENCE OF 3-27</scope>
    <source>
        <strain>Oregon-R</strain>
    </source>
</reference>
<reference key="3">
    <citation type="journal article" date="2000" name="Science">
        <title>The genome sequence of Drosophila melanogaster.</title>
        <authorList>
            <person name="Adams M.D."/>
            <person name="Celniker S.E."/>
            <person name="Holt R.A."/>
            <person name="Evans C.A."/>
            <person name="Gocayne J.D."/>
            <person name="Amanatides P.G."/>
            <person name="Scherer S.E."/>
            <person name="Li P.W."/>
            <person name="Hoskins R.A."/>
            <person name="Galle R.F."/>
            <person name="George R.A."/>
            <person name="Lewis S.E."/>
            <person name="Richards S."/>
            <person name="Ashburner M."/>
            <person name="Henderson S.N."/>
            <person name="Sutton G.G."/>
            <person name="Wortman J.R."/>
            <person name="Yandell M.D."/>
            <person name="Zhang Q."/>
            <person name="Chen L.X."/>
            <person name="Brandon R.C."/>
            <person name="Rogers Y.-H.C."/>
            <person name="Blazej R.G."/>
            <person name="Champe M."/>
            <person name="Pfeiffer B.D."/>
            <person name="Wan K.H."/>
            <person name="Doyle C."/>
            <person name="Baxter E.G."/>
            <person name="Helt G."/>
            <person name="Nelson C.R."/>
            <person name="Miklos G.L.G."/>
            <person name="Abril J.F."/>
            <person name="Agbayani A."/>
            <person name="An H.-J."/>
            <person name="Andrews-Pfannkoch C."/>
            <person name="Baldwin D."/>
            <person name="Ballew R.M."/>
            <person name="Basu A."/>
            <person name="Baxendale J."/>
            <person name="Bayraktaroglu L."/>
            <person name="Beasley E.M."/>
            <person name="Beeson K.Y."/>
            <person name="Benos P.V."/>
            <person name="Berman B.P."/>
            <person name="Bhandari D."/>
            <person name="Bolshakov S."/>
            <person name="Borkova D."/>
            <person name="Botchan M.R."/>
            <person name="Bouck J."/>
            <person name="Brokstein P."/>
            <person name="Brottier P."/>
            <person name="Burtis K.C."/>
            <person name="Busam D.A."/>
            <person name="Butler H."/>
            <person name="Cadieu E."/>
            <person name="Center A."/>
            <person name="Chandra I."/>
            <person name="Cherry J.M."/>
            <person name="Cawley S."/>
            <person name="Dahlke C."/>
            <person name="Davenport L.B."/>
            <person name="Davies P."/>
            <person name="de Pablos B."/>
            <person name="Delcher A."/>
            <person name="Deng Z."/>
            <person name="Mays A.D."/>
            <person name="Dew I."/>
            <person name="Dietz S.M."/>
            <person name="Dodson K."/>
            <person name="Doup L.E."/>
            <person name="Downes M."/>
            <person name="Dugan-Rocha S."/>
            <person name="Dunkov B.C."/>
            <person name="Dunn P."/>
            <person name="Durbin K.J."/>
            <person name="Evangelista C.C."/>
            <person name="Ferraz C."/>
            <person name="Ferriera S."/>
            <person name="Fleischmann W."/>
            <person name="Fosler C."/>
            <person name="Gabrielian A.E."/>
            <person name="Garg N.S."/>
            <person name="Gelbart W.M."/>
            <person name="Glasser K."/>
            <person name="Glodek A."/>
            <person name="Gong F."/>
            <person name="Gorrell J.H."/>
            <person name="Gu Z."/>
            <person name="Guan P."/>
            <person name="Harris M."/>
            <person name="Harris N.L."/>
            <person name="Harvey D.A."/>
            <person name="Heiman T.J."/>
            <person name="Hernandez J.R."/>
            <person name="Houck J."/>
            <person name="Hostin D."/>
            <person name="Houston K.A."/>
            <person name="Howland T.J."/>
            <person name="Wei M.-H."/>
            <person name="Ibegwam C."/>
            <person name="Jalali M."/>
            <person name="Kalush F."/>
            <person name="Karpen G.H."/>
            <person name="Ke Z."/>
            <person name="Kennison J.A."/>
            <person name="Ketchum K.A."/>
            <person name="Kimmel B.E."/>
            <person name="Kodira C.D."/>
            <person name="Kraft C.L."/>
            <person name="Kravitz S."/>
            <person name="Kulp D."/>
            <person name="Lai Z."/>
            <person name="Lasko P."/>
            <person name="Lei Y."/>
            <person name="Levitsky A.A."/>
            <person name="Li J.H."/>
            <person name="Li Z."/>
            <person name="Liang Y."/>
            <person name="Lin X."/>
            <person name="Liu X."/>
            <person name="Mattei B."/>
            <person name="McIntosh T.C."/>
            <person name="McLeod M.P."/>
            <person name="McPherson D."/>
            <person name="Merkulov G."/>
            <person name="Milshina N.V."/>
            <person name="Mobarry C."/>
            <person name="Morris J."/>
            <person name="Moshrefi A."/>
            <person name="Mount S.M."/>
            <person name="Moy M."/>
            <person name="Murphy B."/>
            <person name="Murphy L."/>
            <person name="Muzny D.M."/>
            <person name="Nelson D.L."/>
            <person name="Nelson D.R."/>
            <person name="Nelson K.A."/>
            <person name="Nixon K."/>
            <person name="Nusskern D.R."/>
            <person name="Pacleb J.M."/>
            <person name="Palazzolo M."/>
            <person name="Pittman G.S."/>
            <person name="Pan S."/>
            <person name="Pollard J."/>
            <person name="Puri V."/>
            <person name="Reese M.G."/>
            <person name="Reinert K."/>
            <person name="Remington K."/>
            <person name="Saunders R.D.C."/>
            <person name="Scheeler F."/>
            <person name="Shen H."/>
            <person name="Shue B.C."/>
            <person name="Siden-Kiamos I."/>
            <person name="Simpson M."/>
            <person name="Skupski M.P."/>
            <person name="Smith T.J."/>
            <person name="Spier E."/>
            <person name="Spradling A.C."/>
            <person name="Stapleton M."/>
            <person name="Strong R."/>
            <person name="Sun E."/>
            <person name="Svirskas R."/>
            <person name="Tector C."/>
            <person name="Turner R."/>
            <person name="Venter E."/>
            <person name="Wang A.H."/>
            <person name="Wang X."/>
            <person name="Wang Z.-Y."/>
            <person name="Wassarman D.A."/>
            <person name="Weinstock G.M."/>
            <person name="Weissenbach J."/>
            <person name="Williams S.M."/>
            <person name="Woodage T."/>
            <person name="Worley K.C."/>
            <person name="Wu D."/>
            <person name="Yang S."/>
            <person name="Yao Q.A."/>
            <person name="Ye J."/>
            <person name="Yeh R.-F."/>
            <person name="Zaveri J.S."/>
            <person name="Zhan M."/>
            <person name="Zhang G."/>
            <person name="Zhao Q."/>
            <person name="Zheng L."/>
            <person name="Zheng X.H."/>
            <person name="Zhong F.N."/>
            <person name="Zhong W."/>
            <person name="Zhou X."/>
            <person name="Zhu S.C."/>
            <person name="Zhu X."/>
            <person name="Smith H.O."/>
            <person name="Gibbs R.A."/>
            <person name="Myers E.W."/>
            <person name="Rubin G.M."/>
            <person name="Venter J.C."/>
        </authorList>
    </citation>
    <scope>NUCLEOTIDE SEQUENCE [LARGE SCALE GENOMIC DNA]</scope>
    <source>
        <strain>Berkeley</strain>
    </source>
</reference>
<reference key="4">
    <citation type="journal article" date="2002" name="Genome Biol.">
        <title>Annotation of the Drosophila melanogaster euchromatic genome: a systematic review.</title>
        <authorList>
            <person name="Misra S."/>
            <person name="Crosby M.A."/>
            <person name="Mungall C.J."/>
            <person name="Matthews B.B."/>
            <person name="Campbell K.S."/>
            <person name="Hradecky P."/>
            <person name="Huang Y."/>
            <person name="Kaminker J.S."/>
            <person name="Millburn G.H."/>
            <person name="Prochnik S.E."/>
            <person name="Smith C.D."/>
            <person name="Tupy J.L."/>
            <person name="Whitfield E.J."/>
            <person name="Bayraktaroglu L."/>
            <person name="Berman B.P."/>
            <person name="Bettencourt B.R."/>
            <person name="Celniker S.E."/>
            <person name="de Grey A.D.N.J."/>
            <person name="Drysdale R.A."/>
            <person name="Harris N.L."/>
            <person name="Richter J."/>
            <person name="Russo S."/>
            <person name="Schroeder A.J."/>
            <person name="Shu S.Q."/>
            <person name="Stapleton M."/>
            <person name="Yamada C."/>
            <person name="Ashburner M."/>
            <person name="Gelbart W.M."/>
            <person name="Rubin G.M."/>
            <person name="Lewis S.E."/>
        </authorList>
    </citation>
    <scope>GENOME REANNOTATION</scope>
    <source>
        <strain>Berkeley</strain>
    </source>
</reference>
<reference key="5">
    <citation type="submission" date="2006-06" db="EMBL/GenBank/DDBJ databases">
        <authorList>
            <person name="Stapleton M."/>
            <person name="Carlson J.W."/>
            <person name="Chavez C."/>
            <person name="Frise E."/>
            <person name="George R.A."/>
            <person name="Pacleb J.M."/>
            <person name="Park S."/>
            <person name="Wan K.H."/>
            <person name="Yu C."/>
            <person name="Celniker S.E."/>
        </authorList>
    </citation>
    <scope>NUCLEOTIDE SEQUENCE [LARGE SCALE MRNA]</scope>
    <source>
        <strain>Berkeley</strain>
    </source>
</reference>